<comment type="function">
    <text evidence="4">Salivary protein that promotes host fibrinolysis via accelerating host plasmin generation from plasminogen (PLG) initiated by tPA/tissue-type plasminogen activator (PLAT) (PubMed:29555911). Does not affect urokinase (PLAU)-mediated fibrinolysis in the host (PubMed:29555911). Enhances amidolytic activity of host coagulation factor Xa (F10) (PubMed:29555911).</text>
</comment>
<comment type="subunit">
    <text evidence="4">Homodimer (PubMed:29555911). Interacts with host PLG (PubMed:29555911). Interacts with host PLAT (PubMed:29555911).</text>
</comment>
<comment type="subcellular location">
    <subcellularLocation>
        <location evidence="6">Secreted</location>
    </subcellularLocation>
</comment>
<comment type="tissue specificity">
    <text evidence="4">Saliva (at protein level).</text>
</comment>
<comment type="miscellaneous">
    <text evidence="4">Protects mice from FeCl(3)-induced thrombosis.</text>
</comment>
<comment type="similarity">
    <text evidence="6">Belongs to the salp14 family.</text>
</comment>
<accession>Q4PMS3</accession>
<evidence type="ECO:0000255" key="1"/>
<evidence type="ECO:0000255" key="2">
    <source>
        <dbReference type="PROSITE-ProRule" id="PRU00498"/>
    </source>
</evidence>
<evidence type="ECO:0000256" key="3">
    <source>
        <dbReference type="SAM" id="MobiDB-lite"/>
    </source>
</evidence>
<evidence type="ECO:0000269" key="4">
    <source>
    </source>
</evidence>
<evidence type="ECO:0000303" key="5">
    <source>
    </source>
</evidence>
<evidence type="ECO:0000305" key="6"/>
<evidence type="ECO:0000312" key="7">
    <source>
        <dbReference type="EMBL" id="AAY66688.1"/>
    </source>
</evidence>
<sequence>MGLTGTTLVLVCVAFFGSAAAHNCQNGTRPASEENREGCDYYCWNAETKSWDQFFFGNGERCFYNTGEKGTCLNGECHLTTSSGGPDDTGDNTPPPTEKPKQKKKKPKKTKKPKRKSKKDQKENF</sequence>
<feature type="signal peptide" evidence="1">
    <location>
        <begin position="1"/>
        <end position="21"/>
    </location>
</feature>
<feature type="chain" id="PRO_5004241004" description="Ixonnexin" evidence="1">
    <location>
        <begin position="22"/>
        <end position="125"/>
    </location>
</feature>
<feature type="region of interest" description="Disordered" evidence="3">
    <location>
        <begin position="81"/>
        <end position="125"/>
    </location>
</feature>
<feature type="compositionally biased region" description="Basic residues" evidence="3">
    <location>
        <begin position="101"/>
        <end position="119"/>
    </location>
</feature>
<feature type="glycosylation site" description="N-linked (GlcNAc...) asparagine" evidence="2">
    <location>
        <position position="26"/>
    </location>
</feature>
<organism evidence="7">
    <name type="scientific">Ixodes scapularis</name>
    <name type="common">Black-legged tick</name>
    <name type="synonym">Deer tick</name>
    <dbReference type="NCBI Taxonomy" id="6945"/>
    <lineage>
        <taxon>Eukaryota</taxon>
        <taxon>Metazoa</taxon>
        <taxon>Ecdysozoa</taxon>
        <taxon>Arthropoda</taxon>
        <taxon>Chelicerata</taxon>
        <taxon>Arachnida</taxon>
        <taxon>Acari</taxon>
        <taxon>Parasitiformes</taxon>
        <taxon>Ixodida</taxon>
        <taxon>Ixodoidea</taxon>
        <taxon>Ixodidae</taxon>
        <taxon>Ixodinae</taxon>
        <taxon>Ixodes</taxon>
    </lineage>
</organism>
<protein>
    <recommendedName>
        <fullName evidence="5">Ixonnexin</fullName>
    </recommendedName>
</protein>
<dbReference type="EMBL" id="DQ066051">
    <property type="protein sequence ID" value="AAY66688.1"/>
    <property type="molecule type" value="mRNA"/>
</dbReference>
<dbReference type="VEuPathDB" id="VectorBase:ISCP_031235"/>
<dbReference type="Proteomes" id="UP000001555">
    <property type="component" value="Unplaced"/>
</dbReference>
<dbReference type="GO" id="GO:0005576">
    <property type="term" value="C:extracellular region"/>
    <property type="evidence" value="ECO:0007669"/>
    <property type="project" value="UniProtKB-SubCell"/>
</dbReference>
<dbReference type="GO" id="GO:0090729">
    <property type="term" value="F:toxin activity"/>
    <property type="evidence" value="ECO:0007669"/>
    <property type="project" value="UniProtKB-KW"/>
</dbReference>
<dbReference type="CDD" id="cd23501">
    <property type="entry name" value="TSLPI_Salp14_NTD"/>
    <property type="match status" value="1"/>
</dbReference>
<dbReference type="InterPro" id="IPR011694">
    <property type="entry name" value="Ixonnexin-like"/>
</dbReference>
<dbReference type="Pfam" id="PF07771">
    <property type="entry name" value="TSGP1"/>
    <property type="match status" value="1"/>
</dbReference>
<name>XNXN_IXOSC</name>
<keyword id="KW-1205">Fibrinolytic toxin</keyword>
<keyword id="KW-0325">Glycoprotein</keyword>
<keyword id="KW-1199">Hemostasis impairing toxin</keyword>
<keyword id="KW-1185">Reference proteome</keyword>
<keyword id="KW-0964">Secreted</keyword>
<keyword id="KW-0732">Signal</keyword>
<keyword id="KW-0800">Toxin</keyword>
<reference evidence="7" key="1">
    <citation type="journal article" date="2006" name="Insect Biochem. Mol. Biol.">
        <title>An annotated catalog of salivary gland transcripts from Ixodes scapularis ticks.</title>
        <authorList>
            <person name="Ribeiro J.M.C."/>
            <person name="Alarcon-Chaidez F."/>
            <person name="Francischetti I.M.B."/>
            <person name="Mans B.J."/>
            <person name="Mather T.N."/>
            <person name="Valenzuela J.G."/>
            <person name="Wikel S.K."/>
        </authorList>
    </citation>
    <scope>NUCLEOTIDE SEQUENCE [LARGE SCALE MRNA]</scope>
    <source>
        <strain evidence="7">ISN-L-15</strain>
        <tissue evidence="7">Salivary gland</tissue>
    </source>
</reference>
<reference evidence="6" key="2">
    <citation type="journal article" date="2018" name="Sci. Rep.">
        <title>Ixonnexin from Tick Saliva Promotes Fibrinolysis by Interacting with Plasminogen and Tissue-Type Plasminogen Activator, and Prevents Arterial Thrombosis.</title>
        <authorList>
            <person name="Assumpcao T.C."/>
            <person name="Mizurini D.M."/>
            <person name="Ma D."/>
            <person name="Monteiro R.Q."/>
            <person name="Ahlstedt S."/>
            <person name="Reyes M."/>
            <person name="Kotsyfakis M."/>
            <person name="Mather T.N."/>
            <person name="Andersen J.F."/>
            <person name="Lukszo J."/>
            <person name="Ribeiro J.M.C."/>
            <person name="Francischetti I.M.B."/>
        </authorList>
    </citation>
    <scope>IDENTIFICATION BY MASS SPECTROMETRY</scope>
    <scope>FUNCTION</scope>
    <scope>SUBUNIT</scope>
    <scope>INTERACTION WITH HOST PLAT AND PLG</scope>
    <scope>TISSUE SPECIFICITY</scope>
</reference>
<proteinExistence type="evidence at protein level"/>